<protein>
    <recommendedName>
        <fullName evidence="1">3-isopropylmalate dehydrogenase</fullName>
        <ecNumber evidence="1">1.1.1.85</ecNumber>
    </recommendedName>
    <alternativeName>
        <fullName evidence="1">3-IPM-DH</fullName>
    </alternativeName>
    <alternativeName>
        <fullName evidence="1">Beta-IPM dehydrogenase</fullName>
        <shortName evidence="1">IMDH</shortName>
    </alternativeName>
</protein>
<gene>
    <name evidence="1" type="primary">leuB</name>
    <name type="ordered locus">Psyc_1410</name>
</gene>
<proteinExistence type="inferred from homology"/>
<dbReference type="EC" id="1.1.1.85" evidence="1"/>
<dbReference type="EMBL" id="CP000082">
    <property type="protein sequence ID" value="AAZ19258.1"/>
    <property type="molecule type" value="Genomic_DNA"/>
</dbReference>
<dbReference type="RefSeq" id="WP_011280679.1">
    <property type="nucleotide sequence ID" value="NC_007204.1"/>
</dbReference>
<dbReference type="SMR" id="Q4FRV0"/>
<dbReference type="STRING" id="259536.Psyc_1410"/>
<dbReference type="KEGG" id="par:Psyc_1410"/>
<dbReference type="eggNOG" id="COG0473">
    <property type="taxonomic scope" value="Bacteria"/>
</dbReference>
<dbReference type="HOGENOM" id="CLU_031953_0_3_6"/>
<dbReference type="OrthoDB" id="9767905at2"/>
<dbReference type="UniPathway" id="UPA00048">
    <property type="reaction ID" value="UER00072"/>
</dbReference>
<dbReference type="Proteomes" id="UP000000546">
    <property type="component" value="Chromosome"/>
</dbReference>
<dbReference type="GO" id="GO:0005829">
    <property type="term" value="C:cytosol"/>
    <property type="evidence" value="ECO:0007669"/>
    <property type="project" value="TreeGrafter"/>
</dbReference>
<dbReference type="GO" id="GO:0003862">
    <property type="term" value="F:3-isopropylmalate dehydrogenase activity"/>
    <property type="evidence" value="ECO:0007669"/>
    <property type="project" value="UniProtKB-UniRule"/>
</dbReference>
<dbReference type="GO" id="GO:0000287">
    <property type="term" value="F:magnesium ion binding"/>
    <property type="evidence" value="ECO:0007669"/>
    <property type="project" value="InterPro"/>
</dbReference>
<dbReference type="GO" id="GO:0051287">
    <property type="term" value="F:NAD binding"/>
    <property type="evidence" value="ECO:0007669"/>
    <property type="project" value="InterPro"/>
</dbReference>
<dbReference type="GO" id="GO:0009098">
    <property type="term" value="P:L-leucine biosynthetic process"/>
    <property type="evidence" value="ECO:0007669"/>
    <property type="project" value="UniProtKB-UniRule"/>
</dbReference>
<dbReference type="FunFam" id="3.40.718.10:FF:000028">
    <property type="entry name" value="3-isopropylmalate dehydrogenase"/>
    <property type="match status" value="1"/>
</dbReference>
<dbReference type="Gene3D" id="3.40.718.10">
    <property type="entry name" value="Isopropylmalate Dehydrogenase"/>
    <property type="match status" value="1"/>
</dbReference>
<dbReference type="HAMAP" id="MF_01033">
    <property type="entry name" value="LeuB_type1"/>
    <property type="match status" value="1"/>
</dbReference>
<dbReference type="InterPro" id="IPR019818">
    <property type="entry name" value="IsoCit/isopropylmalate_DH_CS"/>
</dbReference>
<dbReference type="InterPro" id="IPR024084">
    <property type="entry name" value="IsoPropMal-DH-like_dom"/>
</dbReference>
<dbReference type="InterPro" id="IPR004429">
    <property type="entry name" value="Isopropylmalate_DH"/>
</dbReference>
<dbReference type="NCBIfam" id="TIGR00169">
    <property type="entry name" value="leuB"/>
    <property type="match status" value="1"/>
</dbReference>
<dbReference type="PANTHER" id="PTHR42979">
    <property type="entry name" value="3-ISOPROPYLMALATE DEHYDROGENASE"/>
    <property type="match status" value="1"/>
</dbReference>
<dbReference type="PANTHER" id="PTHR42979:SF1">
    <property type="entry name" value="3-ISOPROPYLMALATE DEHYDROGENASE"/>
    <property type="match status" value="1"/>
</dbReference>
<dbReference type="Pfam" id="PF00180">
    <property type="entry name" value="Iso_dh"/>
    <property type="match status" value="1"/>
</dbReference>
<dbReference type="SMART" id="SM01329">
    <property type="entry name" value="Iso_dh"/>
    <property type="match status" value="1"/>
</dbReference>
<dbReference type="SUPFAM" id="SSF53659">
    <property type="entry name" value="Isocitrate/Isopropylmalate dehydrogenase-like"/>
    <property type="match status" value="1"/>
</dbReference>
<dbReference type="PROSITE" id="PS00470">
    <property type="entry name" value="IDH_IMDH"/>
    <property type="match status" value="1"/>
</dbReference>
<reference key="1">
    <citation type="journal article" date="2010" name="Appl. Environ. Microbiol.">
        <title>The genome sequence of Psychrobacter arcticus 273-4, a psychroactive Siberian permafrost bacterium, reveals mechanisms for adaptation to low-temperature growth.</title>
        <authorList>
            <person name="Ayala-del-Rio H.L."/>
            <person name="Chain P.S."/>
            <person name="Grzymski J.J."/>
            <person name="Ponder M.A."/>
            <person name="Ivanova N."/>
            <person name="Bergholz P.W."/>
            <person name="Di Bartolo G."/>
            <person name="Hauser L."/>
            <person name="Land M."/>
            <person name="Bakermans C."/>
            <person name="Rodrigues D."/>
            <person name="Klappenbach J."/>
            <person name="Zarka D."/>
            <person name="Larimer F."/>
            <person name="Richardson P."/>
            <person name="Murray A."/>
            <person name="Thomashow M."/>
            <person name="Tiedje J.M."/>
        </authorList>
    </citation>
    <scope>NUCLEOTIDE SEQUENCE [LARGE SCALE GENOMIC DNA]</scope>
    <source>
        <strain>DSM 17307 / VKM B-2377 / 273-4</strain>
    </source>
</reference>
<feature type="chain" id="PRO_0000083733" description="3-isopropylmalate dehydrogenase">
    <location>
        <begin position="1"/>
        <end position="367"/>
    </location>
</feature>
<feature type="binding site" evidence="1">
    <location>
        <begin position="75"/>
        <end position="88"/>
    </location>
    <ligand>
        <name>NAD(+)</name>
        <dbReference type="ChEBI" id="CHEBI:57540"/>
    </ligand>
</feature>
<feature type="binding site" evidence="1">
    <location>
        <position position="95"/>
    </location>
    <ligand>
        <name>substrate</name>
    </ligand>
</feature>
<feature type="binding site" evidence="1">
    <location>
        <position position="105"/>
    </location>
    <ligand>
        <name>substrate</name>
    </ligand>
</feature>
<feature type="binding site" evidence="1">
    <location>
        <position position="133"/>
    </location>
    <ligand>
        <name>substrate</name>
    </ligand>
</feature>
<feature type="binding site" evidence="1">
    <location>
        <position position="230"/>
    </location>
    <ligand>
        <name>Mg(2+)</name>
        <dbReference type="ChEBI" id="CHEBI:18420"/>
    </ligand>
</feature>
<feature type="binding site" evidence="1">
    <location>
        <position position="230"/>
    </location>
    <ligand>
        <name>substrate</name>
    </ligand>
</feature>
<feature type="binding site" evidence="1">
    <location>
        <position position="254"/>
    </location>
    <ligand>
        <name>Mg(2+)</name>
        <dbReference type="ChEBI" id="CHEBI:18420"/>
    </ligand>
</feature>
<feature type="binding site" evidence="1">
    <location>
        <position position="258"/>
    </location>
    <ligand>
        <name>Mg(2+)</name>
        <dbReference type="ChEBI" id="CHEBI:18420"/>
    </ligand>
</feature>
<feature type="binding site" evidence="1">
    <location>
        <begin position="288"/>
        <end position="300"/>
    </location>
    <ligand>
        <name>NAD(+)</name>
        <dbReference type="ChEBI" id="CHEBI:57540"/>
    </ligand>
</feature>
<feature type="site" description="Important for catalysis" evidence="1">
    <location>
        <position position="140"/>
    </location>
</feature>
<feature type="site" description="Important for catalysis" evidence="1">
    <location>
        <position position="197"/>
    </location>
</feature>
<organism>
    <name type="scientific">Psychrobacter arcticus (strain DSM 17307 / VKM B-2377 / 273-4)</name>
    <dbReference type="NCBI Taxonomy" id="259536"/>
    <lineage>
        <taxon>Bacteria</taxon>
        <taxon>Pseudomonadati</taxon>
        <taxon>Pseudomonadota</taxon>
        <taxon>Gammaproteobacteria</taxon>
        <taxon>Moraxellales</taxon>
        <taxon>Moraxellaceae</taxon>
        <taxon>Psychrobacter</taxon>
    </lineage>
</organism>
<evidence type="ECO:0000255" key="1">
    <source>
        <dbReference type="HAMAP-Rule" id="MF_01033"/>
    </source>
</evidence>
<sequence length="367" mass="39205">MATILTLAGDGIGPEIMTQAIDVLNAVNNKFALGLTLESGLIGGVAVDATGEPLPEETLQRARAADAVLLGAVGGPKWDGIERSKRPERGLLKIRSELGLFANLRVAKLYPQLVNASSIKPEIISGLDLLIVRELTGGIYFGEPRGIRTLENGEQQGYNTMVYSTSEINRIGKVAFELAQTRAQAAGTPAKVCSIDKANVLEVTELWKQTMIELQQAEYSDVALSHMYADNACMQLIKDPKQFDVMVTGNLFGDILSDEAAMLTGSIGMLPSASLDEAGKGMYEPCHGSAPDIAGQDIANPLATILSVAMMLRYTFKQEVAAQAIEQAVSDVLDDGLRTVDILDRNEAGLIQVGCQQMGQAVLAKLL</sequence>
<accession>Q4FRV0</accession>
<name>LEU3_PSYA2</name>
<comment type="function">
    <text evidence="1">Catalyzes the oxidation of 3-carboxy-2-hydroxy-4-methylpentanoate (3-isopropylmalate) to 3-carboxy-4-methyl-2-oxopentanoate. The product decarboxylates to 4-methyl-2 oxopentanoate.</text>
</comment>
<comment type="catalytic activity">
    <reaction evidence="1">
        <text>(2R,3S)-3-isopropylmalate + NAD(+) = 4-methyl-2-oxopentanoate + CO2 + NADH</text>
        <dbReference type="Rhea" id="RHEA:32271"/>
        <dbReference type="ChEBI" id="CHEBI:16526"/>
        <dbReference type="ChEBI" id="CHEBI:17865"/>
        <dbReference type="ChEBI" id="CHEBI:35121"/>
        <dbReference type="ChEBI" id="CHEBI:57540"/>
        <dbReference type="ChEBI" id="CHEBI:57945"/>
        <dbReference type="EC" id="1.1.1.85"/>
    </reaction>
</comment>
<comment type="cofactor">
    <cofactor evidence="1">
        <name>Mg(2+)</name>
        <dbReference type="ChEBI" id="CHEBI:18420"/>
    </cofactor>
    <cofactor evidence="1">
        <name>Mn(2+)</name>
        <dbReference type="ChEBI" id="CHEBI:29035"/>
    </cofactor>
    <text evidence="1">Binds 1 Mg(2+) or Mn(2+) ion per subunit.</text>
</comment>
<comment type="pathway">
    <text evidence="1">Amino-acid biosynthesis; L-leucine biosynthesis; L-leucine from 3-methyl-2-oxobutanoate: step 3/4.</text>
</comment>
<comment type="subunit">
    <text evidence="1">Homodimer.</text>
</comment>
<comment type="subcellular location">
    <subcellularLocation>
        <location evidence="1">Cytoplasm</location>
    </subcellularLocation>
</comment>
<comment type="similarity">
    <text evidence="1">Belongs to the isocitrate and isopropylmalate dehydrogenases family. LeuB type 1 subfamily.</text>
</comment>
<keyword id="KW-0028">Amino-acid biosynthesis</keyword>
<keyword id="KW-0100">Branched-chain amino acid biosynthesis</keyword>
<keyword id="KW-0963">Cytoplasm</keyword>
<keyword id="KW-0432">Leucine biosynthesis</keyword>
<keyword id="KW-0460">Magnesium</keyword>
<keyword id="KW-0464">Manganese</keyword>
<keyword id="KW-0479">Metal-binding</keyword>
<keyword id="KW-0520">NAD</keyword>
<keyword id="KW-0560">Oxidoreductase</keyword>
<keyword id="KW-1185">Reference proteome</keyword>